<organism>
    <name type="scientific">Anaplasma marginale (strain St. Maries)</name>
    <dbReference type="NCBI Taxonomy" id="234826"/>
    <lineage>
        <taxon>Bacteria</taxon>
        <taxon>Pseudomonadati</taxon>
        <taxon>Pseudomonadota</taxon>
        <taxon>Alphaproteobacteria</taxon>
        <taxon>Rickettsiales</taxon>
        <taxon>Anaplasmataceae</taxon>
        <taxon>Anaplasma</taxon>
    </lineage>
</organism>
<comment type="function">
    <text evidence="1">Plays an essential role in the initiation and regulation of chromosomal replication. ATP-DnaA binds to the origin of replication (oriC) to initiate formation of the DNA replication initiation complex once per cell cycle. Binds the DnaA box (a 9 base pair repeat at the origin) and separates the double-stranded (ds)DNA. Forms a right-handed helical filament on oriC DNA; dsDNA binds to the exterior of the filament while single-stranded (ss)DNA is stabiized in the filament's interior. The ATP-DnaA-oriC complex binds and stabilizes one strand of the AT-rich DNA unwinding element (DUE), permitting loading of DNA polymerase. After initiation quickly degrades to an ADP-DnaA complex that is not apt for DNA replication. Binds acidic phospholipids.</text>
</comment>
<comment type="subunit">
    <text evidence="1">Oligomerizes as a right-handed, spiral filament on DNA at oriC.</text>
</comment>
<comment type="subcellular location">
    <subcellularLocation>
        <location evidence="1">Cytoplasm</location>
    </subcellularLocation>
</comment>
<comment type="domain">
    <text evidence="1">Domain I is involved in oligomerization and binding regulators, domain II is flexibile and of varying length in different bacteria, domain III forms the AAA+ region, while domain IV binds dsDNA.</text>
</comment>
<comment type="similarity">
    <text evidence="1">Belongs to the DnaA family.</text>
</comment>
<protein>
    <recommendedName>
        <fullName evidence="1">Chromosomal replication initiator protein DnaA</fullName>
    </recommendedName>
</protein>
<sequence length="471" mass="52837">MVDVSETTERCVVHKRQGQDGGDAAWRGVQKKLRDFYGSAIYDSWLSALVYSGNENGRVVLLVPTRFIKEWILVHYLERILKYWQDESDAVYSVDICVSDGVGVQPQMAEHPDGAVDGPPVVMVGGTYDHLSSPLDPRFTFDNFVVGKPNELAFAAARRVAESSAPIPGSNPLFLYGGVGLGKTHLMHAIAWYILNSSVKRKIAYLSAEKFMYQYVTALRSKDIMLFKEQFRSVDILMVDDVQFISGKDSTQEEFFHTFNALIDQNKQLVISADRSPSDLDGVEDRIKSRLGWGLVADINETTFELRLGILQLKIEKMGVHVPNEVLEFLAKNIKSNIRELEGALNKVVAHSSLVGRSVTIESASGILSDLLRANHRMVTVGMIQKKVAEFFGIKLEDMYSARRLRALARPRQVAMYLAKRLTQKSLPDIGKSFGGRDHATVIHAVKQIEKFMEDDAKLADDINLLIRMLR</sequence>
<reference key="1">
    <citation type="journal article" date="2005" name="Proc. Natl. Acad. Sci. U.S.A.">
        <title>Complete genome sequencing of Anaplasma marginale reveals that the surface is skewed to two superfamilies of outer membrane proteins.</title>
        <authorList>
            <person name="Brayton K.A."/>
            <person name="Kappmeyer L.S."/>
            <person name="Herndon D.R."/>
            <person name="Dark M.J."/>
            <person name="Tibbals D.L."/>
            <person name="Palmer G.H."/>
            <person name="McGuire T.C."/>
            <person name="Knowles D.P. Jr."/>
        </authorList>
    </citation>
    <scope>NUCLEOTIDE SEQUENCE [LARGE SCALE GENOMIC DNA]</scope>
    <source>
        <strain>St. Maries</strain>
    </source>
</reference>
<name>DNAA_ANAMM</name>
<evidence type="ECO:0000255" key="1">
    <source>
        <dbReference type="HAMAP-Rule" id="MF_00377"/>
    </source>
</evidence>
<keyword id="KW-0067">ATP-binding</keyword>
<keyword id="KW-0963">Cytoplasm</keyword>
<keyword id="KW-0235">DNA replication</keyword>
<keyword id="KW-0238">DNA-binding</keyword>
<keyword id="KW-0446">Lipid-binding</keyword>
<keyword id="KW-0547">Nucleotide-binding</keyword>
<gene>
    <name evidence="1" type="primary">dnaA</name>
    <name type="ordered locus">AM430</name>
</gene>
<dbReference type="EMBL" id="CP000030">
    <property type="protein sequence ID" value="AAV86481.1"/>
    <property type="molecule type" value="Genomic_DNA"/>
</dbReference>
<dbReference type="RefSeq" id="WP_011114267.1">
    <property type="nucleotide sequence ID" value="NC_004842.2"/>
</dbReference>
<dbReference type="SMR" id="Q5PB48"/>
<dbReference type="KEGG" id="ama:AM430"/>
<dbReference type="HOGENOM" id="CLU_026910_3_0_5"/>
<dbReference type="GO" id="GO:0005737">
    <property type="term" value="C:cytoplasm"/>
    <property type="evidence" value="ECO:0007669"/>
    <property type="project" value="UniProtKB-SubCell"/>
</dbReference>
<dbReference type="GO" id="GO:0005886">
    <property type="term" value="C:plasma membrane"/>
    <property type="evidence" value="ECO:0007669"/>
    <property type="project" value="TreeGrafter"/>
</dbReference>
<dbReference type="GO" id="GO:0005524">
    <property type="term" value="F:ATP binding"/>
    <property type="evidence" value="ECO:0007669"/>
    <property type="project" value="UniProtKB-UniRule"/>
</dbReference>
<dbReference type="GO" id="GO:0016887">
    <property type="term" value="F:ATP hydrolysis activity"/>
    <property type="evidence" value="ECO:0007669"/>
    <property type="project" value="InterPro"/>
</dbReference>
<dbReference type="GO" id="GO:0003688">
    <property type="term" value="F:DNA replication origin binding"/>
    <property type="evidence" value="ECO:0007669"/>
    <property type="project" value="UniProtKB-UniRule"/>
</dbReference>
<dbReference type="GO" id="GO:0008289">
    <property type="term" value="F:lipid binding"/>
    <property type="evidence" value="ECO:0007669"/>
    <property type="project" value="UniProtKB-KW"/>
</dbReference>
<dbReference type="GO" id="GO:0006270">
    <property type="term" value="P:DNA replication initiation"/>
    <property type="evidence" value="ECO:0007669"/>
    <property type="project" value="UniProtKB-UniRule"/>
</dbReference>
<dbReference type="GO" id="GO:0006275">
    <property type="term" value="P:regulation of DNA replication"/>
    <property type="evidence" value="ECO:0007669"/>
    <property type="project" value="UniProtKB-UniRule"/>
</dbReference>
<dbReference type="CDD" id="cd00009">
    <property type="entry name" value="AAA"/>
    <property type="match status" value="1"/>
</dbReference>
<dbReference type="CDD" id="cd06571">
    <property type="entry name" value="Bac_DnaA_C"/>
    <property type="match status" value="1"/>
</dbReference>
<dbReference type="FunFam" id="3.40.50.300:FF:000668">
    <property type="entry name" value="Chromosomal replication initiator protein DnaA"/>
    <property type="match status" value="1"/>
</dbReference>
<dbReference type="Gene3D" id="1.10.1750.10">
    <property type="match status" value="1"/>
</dbReference>
<dbReference type="Gene3D" id="1.10.8.60">
    <property type="match status" value="1"/>
</dbReference>
<dbReference type="Gene3D" id="3.30.300.180">
    <property type="match status" value="1"/>
</dbReference>
<dbReference type="Gene3D" id="3.40.50.300">
    <property type="entry name" value="P-loop containing nucleotide triphosphate hydrolases"/>
    <property type="match status" value="1"/>
</dbReference>
<dbReference type="HAMAP" id="MF_00377">
    <property type="entry name" value="DnaA_bact"/>
    <property type="match status" value="1"/>
</dbReference>
<dbReference type="InterPro" id="IPR003593">
    <property type="entry name" value="AAA+_ATPase"/>
</dbReference>
<dbReference type="InterPro" id="IPR001957">
    <property type="entry name" value="Chromosome_initiator_DnaA"/>
</dbReference>
<dbReference type="InterPro" id="IPR020591">
    <property type="entry name" value="Chromosome_initiator_DnaA-like"/>
</dbReference>
<dbReference type="InterPro" id="IPR018312">
    <property type="entry name" value="Chromosome_initiator_DnaA_CS"/>
</dbReference>
<dbReference type="InterPro" id="IPR013159">
    <property type="entry name" value="DnaA_C"/>
</dbReference>
<dbReference type="InterPro" id="IPR013317">
    <property type="entry name" value="DnaA_dom"/>
</dbReference>
<dbReference type="InterPro" id="IPR024633">
    <property type="entry name" value="DnaA_N_dom"/>
</dbReference>
<dbReference type="InterPro" id="IPR038454">
    <property type="entry name" value="DnaA_N_sf"/>
</dbReference>
<dbReference type="InterPro" id="IPR027417">
    <property type="entry name" value="P-loop_NTPase"/>
</dbReference>
<dbReference type="InterPro" id="IPR010921">
    <property type="entry name" value="Trp_repressor/repl_initiator"/>
</dbReference>
<dbReference type="NCBIfam" id="TIGR00362">
    <property type="entry name" value="DnaA"/>
    <property type="match status" value="1"/>
</dbReference>
<dbReference type="PANTHER" id="PTHR30050">
    <property type="entry name" value="CHROMOSOMAL REPLICATION INITIATOR PROTEIN DNAA"/>
    <property type="match status" value="1"/>
</dbReference>
<dbReference type="PANTHER" id="PTHR30050:SF2">
    <property type="entry name" value="CHROMOSOMAL REPLICATION INITIATOR PROTEIN DNAA"/>
    <property type="match status" value="1"/>
</dbReference>
<dbReference type="Pfam" id="PF00308">
    <property type="entry name" value="Bac_DnaA"/>
    <property type="match status" value="1"/>
</dbReference>
<dbReference type="Pfam" id="PF08299">
    <property type="entry name" value="Bac_DnaA_C"/>
    <property type="match status" value="1"/>
</dbReference>
<dbReference type="Pfam" id="PF11638">
    <property type="entry name" value="DnaA_N"/>
    <property type="match status" value="1"/>
</dbReference>
<dbReference type="PRINTS" id="PR00051">
    <property type="entry name" value="DNAA"/>
</dbReference>
<dbReference type="SMART" id="SM00382">
    <property type="entry name" value="AAA"/>
    <property type="match status" value="1"/>
</dbReference>
<dbReference type="SMART" id="SM00760">
    <property type="entry name" value="Bac_DnaA_C"/>
    <property type="match status" value="1"/>
</dbReference>
<dbReference type="SUPFAM" id="SSF52540">
    <property type="entry name" value="P-loop containing nucleoside triphosphate hydrolases"/>
    <property type="match status" value="1"/>
</dbReference>
<dbReference type="SUPFAM" id="SSF48295">
    <property type="entry name" value="TrpR-like"/>
    <property type="match status" value="1"/>
</dbReference>
<dbReference type="PROSITE" id="PS01008">
    <property type="entry name" value="DNAA"/>
    <property type="match status" value="1"/>
</dbReference>
<accession>Q5PB48</accession>
<proteinExistence type="inferred from homology"/>
<feature type="chain" id="PRO_0000114120" description="Chromosomal replication initiator protein DnaA">
    <location>
        <begin position="1"/>
        <end position="471"/>
    </location>
</feature>
<feature type="region of interest" description="Domain I, interacts with DnaA modulators" evidence="1">
    <location>
        <begin position="1"/>
        <end position="91"/>
    </location>
</feature>
<feature type="region of interest" description="Domain II" evidence="1">
    <location>
        <begin position="91"/>
        <end position="133"/>
    </location>
</feature>
<feature type="region of interest" description="Domain III, AAA+ region" evidence="1">
    <location>
        <begin position="134"/>
        <end position="352"/>
    </location>
</feature>
<feature type="region of interest" description="Domain IV, binds dsDNA" evidence="1">
    <location>
        <begin position="353"/>
        <end position="471"/>
    </location>
</feature>
<feature type="binding site" evidence="1">
    <location>
        <position position="180"/>
    </location>
    <ligand>
        <name>ATP</name>
        <dbReference type="ChEBI" id="CHEBI:30616"/>
    </ligand>
</feature>
<feature type="binding site" evidence="1">
    <location>
        <position position="182"/>
    </location>
    <ligand>
        <name>ATP</name>
        <dbReference type="ChEBI" id="CHEBI:30616"/>
    </ligand>
</feature>
<feature type="binding site" evidence="1">
    <location>
        <position position="183"/>
    </location>
    <ligand>
        <name>ATP</name>
        <dbReference type="ChEBI" id="CHEBI:30616"/>
    </ligand>
</feature>
<feature type="binding site" evidence="1">
    <location>
        <position position="184"/>
    </location>
    <ligand>
        <name>ATP</name>
        <dbReference type="ChEBI" id="CHEBI:30616"/>
    </ligand>
</feature>